<gene>
    <name evidence="1" type="primary">ttcA</name>
    <name type="ordered locus">Rfer_0815</name>
</gene>
<comment type="function">
    <text evidence="1">Catalyzes the ATP-dependent 2-thiolation of cytidine in position 32 of tRNA, to form 2-thiocytidine (s(2)C32). The sulfur atoms are provided by the cysteine/cysteine desulfurase (IscS) system.</text>
</comment>
<comment type="catalytic activity">
    <reaction evidence="1">
        <text>cytidine(32) in tRNA + S-sulfanyl-L-cysteinyl-[cysteine desulfurase] + AH2 + ATP = 2-thiocytidine(32) in tRNA + L-cysteinyl-[cysteine desulfurase] + A + AMP + diphosphate + H(+)</text>
        <dbReference type="Rhea" id="RHEA:57048"/>
        <dbReference type="Rhea" id="RHEA-COMP:10288"/>
        <dbReference type="Rhea" id="RHEA-COMP:12157"/>
        <dbReference type="Rhea" id="RHEA-COMP:12158"/>
        <dbReference type="Rhea" id="RHEA-COMP:14821"/>
        <dbReference type="ChEBI" id="CHEBI:13193"/>
        <dbReference type="ChEBI" id="CHEBI:15378"/>
        <dbReference type="ChEBI" id="CHEBI:17499"/>
        <dbReference type="ChEBI" id="CHEBI:29950"/>
        <dbReference type="ChEBI" id="CHEBI:30616"/>
        <dbReference type="ChEBI" id="CHEBI:33019"/>
        <dbReference type="ChEBI" id="CHEBI:61963"/>
        <dbReference type="ChEBI" id="CHEBI:82748"/>
        <dbReference type="ChEBI" id="CHEBI:141453"/>
        <dbReference type="ChEBI" id="CHEBI:456215"/>
    </reaction>
    <physiologicalReaction direction="left-to-right" evidence="1">
        <dbReference type="Rhea" id="RHEA:57049"/>
    </physiologicalReaction>
</comment>
<comment type="cofactor">
    <cofactor evidence="1">
        <name>Mg(2+)</name>
        <dbReference type="ChEBI" id="CHEBI:18420"/>
    </cofactor>
</comment>
<comment type="cofactor">
    <cofactor evidence="1">
        <name>[4Fe-4S] cluster</name>
        <dbReference type="ChEBI" id="CHEBI:49883"/>
    </cofactor>
    <text evidence="1">Binds 1 [4Fe-4S] cluster per subunit. The cluster is chelated by three Cys residues, the fourth Fe has a free coordination site that may bind a sulfur atom transferred from the persulfide of IscS.</text>
</comment>
<comment type="pathway">
    <text evidence="1">tRNA modification.</text>
</comment>
<comment type="subunit">
    <text evidence="1">Homodimer.</text>
</comment>
<comment type="subcellular location">
    <subcellularLocation>
        <location evidence="1">Cytoplasm</location>
    </subcellularLocation>
</comment>
<comment type="miscellaneous">
    <text evidence="1">The thiolation reaction likely consists of two steps: a first activation step by ATP to form an adenylated intermediate of the target base of tRNA, and a second nucleophilic substitution step of the sulfur (S) atom supplied by the hydrosulfide attached to the Fe-S cluster.</text>
</comment>
<comment type="similarity">
    <text evidence="1">Belongs to the TtcA family.</text>
</comment>
<keyword id="KW-0004">4Fe-4S</keyword>
<keyword id="KW-0067">ATP-binding</keyword>
<keyword id="KW-0963">Cytoplasm</keyword>
<keyword id="KW-0408">Iron</keyword>
<keyword id="KW-0411">Iron-sulfur</keyword>
<keyword id="KW-0460">Magnesium</keyword>
<keyword id="KW-0479">Metal-binding</keyword>
<keyword id="KW-0547">Nucleotide-binding</keyword>
<keyword id="KW-1185">Reference proteome</keyword>
<keyword id="KW-0694">RNA-binding</keyword>
<keyword id="KW-0808">Transferase</keyword>
<keyword id="KW-0819">tRNA processing</keyword>
<keyword id="KW-0820">tRNA-binding</keyword>
<organism>
    <name type="scientific">Albidiferax ferrireducens (strain ATCC BAA-621 / DSM 15236 / T118)</name>
    <name type="common">Rhodoferax ferrireducens</name>
    <dbReference type="NCBI Taxonomy" id="338969"/>
    <lineage>
        <taxon>Bacteria</taxon>
        <taxon>Pseudomonadati</taxon>
        <taxon>Pseudomonadota</taxon>
        <taxon>Betaproteobacteria</taxon>
        <taxon>Burkholderiales</taxon>
        <taxon>Comamonadaceae</taxon>
        <taxon>Rhodoferax</taxon>
    </lineage>
</organism>
<proteinExistence type="inferred from homology"/>
<dbReference type="EC" id="2.8.1.-" evidence="1"/>
<dbReference type="EMBL" id="CP000267">
    <property type="protein sequence ID" value="ABD68565.1"/>
    <property type="molecule type" value="Genomic_DNA"/>
</dbReference>
<dbReference type="RefSeq" id="WP_011463138.1">
    <property type="nucleotide sequence ID" value="NC_007908.1"/>
</dbReference>
<dbReference type="SMR" id="Q220I8"/>
<dbReference type="STRING" id="338969.Rfer_0815"/>
<dbReference type="KEGG" id="rfr:Rfer_0815"/>
<dbReference type="eggNOG" id="COG0037">
    <property type="taxonomic scope" value="Bacteria"/>
</dbReference>
<dbReference type="HOGENOM" id="CLU_026481_0_0_4"/>
<dbReference type="Proteomes" id="UP000008332">
    <property type="component" value="Chromosome"/>
</dbReference>
<dbReference type="GO" id="GO:0005737">
    <property type="term" value="C:cytoplasm"/>
    <property type="evidence" value="ECO:0007669"/>
    <property type="project" value="UniProtKB-SubCell"/>
</dbReference>
<dbReference type="GO" id="GO:0051539">
    <property type="term" value="F:4 iron, 4 sulfur cluster binding"/>
    <property type="evidence" value="ECO:0007669"/>
    <property type="project" value="UniProtKB-UniRule"/>
</dbReference>
<dbReference type="GO" id="GO:0005524">
    <property type="term" value="F:ATP binding"/>
    <property type="evidence" value="ECO:0007669"/>
    <property type="project" value="UniProtKB-UniRule"/>
</dbReference>
<dbReference type="GO" id="GO:0000287">
    <property type="term" value="F:magnesium ion binding"/>
    <property type="evidence" value="ECO:0007669"/>
    <property type="project" value="UniProtKB-UniRule"/>
</dbReference>
<dbReference type="GO" id="GO:0016783">
    <property type="term" value="F:sulfurtransferase activity"/>
    <property type="evidence" value="ECO:0007669"/>
    <property type="project" value="UniProtKB-UniRule"/>
</dbReference>
<dbReference type="GO" id="GO:0000049">
    <property type="term" value="F:tRNA binding"/>
    <property type="evidence" value="ECO:0007669"/>
    <property type="project" value="UniProtKB-KW"/>
</dbReference>
<dbReference type="GO" id="GO:0034227">
    <property type="term" value="P:tRNA thio-modification"/>
    <property type="evidence" value="ECO:0007669"/>
    <property type="project" value="UniProtKB-UniRule"/>
</dbReference>
<dbReference type="CDD" id="cd24138">
    <property type="entry name" value="TtcA-like"/>
    <property type="match status" value="1"/>
</dbReference>
<dbReference type="Gene3D" id="3.40.50.620">
    <property type="entry name" value="HUPs"/>
    <property type="match status" value="1"/>
</dbReference>
<dbReference type="HAMAP" id="MF_01850">
    <property type="entry name" value="TtcA"/>
    <property type="match status" value="1"/>
</dbReference>
<dbReference type="InterPro" id="IPR014729">
    <property type="entry name" value="Rossmann-like_a/b/a_fold"/>
</dbReference>
<dbReference type="InterPro" id="IPR011063">
    <property type="entry name" value="TilS/TtcA_N"/>
</dbReference>
<dbReference type="InterPro" id="IPR012089">
    <property type="entry name" value="tRNA_Cyd_32_2_STrfase"/>
</dbReference>
<dbReference type="NCBIfam" id="NF007972">
    <property type="entry name" value="PRK10696.1"/>
    <property type="match status" value="1"/>
</dbReference>
<dbReference type="PANTHER" id="PTHR43686:SF1">
    <property type="entry name" value="AMINOTRAN_5 DOMAIN-CONTAINING PROTEIN"/>
    <property type="match status" value="1"/>
</dbReference>
<dbReference type="PANTHER" id="PTHR43686">
    <property type="entry name" value="SULFURTRANSFERASE-RELATED"/>
    <property type="match status" value="1"/>
</dbReference>
<dbReference type="Pfam" id="PF01171">
    <property type="entry name" value="ATP_bind_3"/>
    <property type="match status" value="1"/>
</dbReference>
<dbReference type="SUPFAM" id="SSF52402">
    <property type="entry name" value="Adenine nucleotide alpha hydrolases-like"/>
    <property type="match status" value="1"/>
</dbReference>
<reference key="1">
    <citation type="submission" date="2006-02" db="EMBL/GenBank/DDBJ databases">
        <title>Complete sequence of chromosome of Rhodoferax ferrireducens DSM 15236.</title>
        <authorList>
            <person name="Copeland A."/>
            <person name="Lucas S."/>
            <person name="Lapidus A."/>
            <person name="Barry K."/>
            <person name="Detter J.C."/>
            <person name="Glavina del Rio T."/>
            <person name="Hammon N."/>
            <person name="Israni S."/>
            <person name="Pitluck S."/>
            <person name="Brettin T."/>
            <person name="Bruce D."/>
            <person name="Han C."/>
            <person name="Tapia R."/>
            <person name="Gilna P."/>
            <person name="Kiss H."/>
            <person name="Schmutz J."/>
            <person name="Larimer F."/>
            <person name="Land M."/>
            <person name="Kyrpides N."/>
            <person name="Ivanova N."/>
            <person name="Richardson P."/>
        </authorList>
    </citation>
    <scope>NUCLEOTIDE SEQUENCE [LARGE SCALE GENOMIC DNA]</scope>
    <source>
        <strain>ATCC BAA-621 / DSM 15236 / T118</strain>
    </source>
</reference>
<protein>
    <recommendedName>
        <fullName evidence="1">tRNA-cytidine(32) 2-sulfurtransferase</fullName>
        <ecNumber evidence="1">2.8.1.-</ecNumber>
    </recommendedName>
    <alternativeName>
        <fullName evidence="1">Two-thiocytidine biosynthesis protein A</fullName>
    </alternativeName>
    <alternativeName>
        <fullName evidence="1">tRNA 2-thiocytidine biosynthesis protein TtcA</fullName>
    </alternativeName>
</protein>
<feature type="chain" id="PRO_0000348821" description="tRNA-cytidine(32) 2-sulfurtransferase">
    <location>
        <begin position="1"/>
        <end position="338"/>
    </location>
</feature>
<feature type="short sequence motif" description="PP-loop motif" evidence="1">
    <location>
        <begin position="86"/>
        <end position="91"/>
    </location>
</feature>
<feature type="binding site" evidence="1">
    <location>
        <position position="161"/>
    </location>
    <ligand>
        <name>[4Fe-4S] cluster</name>
        <dbReference type="ChEBI" id="CHEBI:49883"/>
    </ligand>
</feature>
<feature type="binding site" evidence="1">
    <location>
        <position position="164"/>
    </location>
    <ligand>
        <name>[4Fe-4S] cluster</name>
        <dbReference type="ChEBI" id="CHEBI:49883"/>
    </ligand>
</feature>
<feature type="binding site" evidence="1">
    <location>
        <position position="252"/>
    </location>
    <ligand>
        <name>[4Fe-4S] cluster</name>
        <dbReference type="ChEBI" id="CHEBI:49883"/>
    </ligand>
</feature>
<sequence>MNAVWTDNDTQAEDLSPQGRVASQLVRLKSDLQAFADATASAPATREPKIERETHKLEKRLCRQVGQAIMDFNMIEEGDRVMVCVSGGKDSYGLLDILLKMQQRAPINFEIVAVNLDQKQPGFPAHILPEYLAKLGIEFHIETQDTYSIVKKVIPEGKTMCSLCSRLRRGILYRVADELKITKIALGHHRDDMLQTFFLNMFFGGKLKGMPPKLVSDDGGHIVIRPLANVAEKDLTRWAAHRQFPIIPCSLCGSQENLQRQLIGQMLRDWEKQYPGRTETMFTALQNVVPSHLMDATRYDFKGLKITGVPDADGDRVFDEETFPMAKLAGVQVLGSSC</sequence>
<accession>Q220I8</accession>
<evidence type="ECO:0000255" key="1">
    <source>
        <dbReference type="HAMAP-Rule" id="MF_01850"/>
    </source>
</evidence>
<name>TTCA_ALBFT</name>